<proteinExistence type="inferred from homology"/>
<reference key="1">
    <citation type="submission" date="2007-03" db="EMBL/GenBank/DDBJ databases">
        <title>Sequencing analysis of Nasturtium officinale chloroplast DNA.</title>
        <authorList>
            <person name="Hosouchi T."/>
            <person name="Tsuruoka H."/>
            <person name="Kotani H."/>
        </authorList>
    </citation>
    <scope>NUCLEOTIDE SEQUENCE [LARGE SCALE GENOMIC DNA]</scope>
</reference>
<name>NU5C_NASOF</name>
<sequence>MEHTYEYSWIIPFIPLPVPILLGVGLLLFPTATKNLRRMWTFLSIFLLSIIMIFSLYLSIQQIFLSCIHQNVWSWTINNEFSFEFGYFIDPLTSIMSILITTVGILVLIYSDNYMSHDQGYLRFFAYMGFFNTSMLGLVTSSNLIQVYFFWELVGMCSYLLIGFWFTRPIAANACQKAFVTNRVGDFGLLLGILGLYWITGSFEFQDLFEIFNNLVLNNRVNLLFLTLCAFLLFVGPIAKSAQFPLHVWLPDAMEGPTPISALIHAATMVAAGIFLVARLLPLFIVIPSIMYIISLIGIITVLLGATLALAQKDIKRGLAYSTMSQLGYMMLALGMGSYRSALFHLITHAYSKALLFLGSGSIIHSMEAIVGYSPDKSQNMILMGGLTKHVPITKIAFLVGTLSLCGIPPLACFWSKDEILNDSLLFSPIFAIIAFSTAGLTAFYMFRIYLLTFEGHLNTYFINYSGKKSSSVYSISLWGKEEEKKLNRNFGLVPLLTMNNTKRASFFCKKTYKISNNVRNQTFITVENFGLNPRTFYYPHESDNTILFPMLVLLLFTLFIGAIGIPFTQEGLDFDILSKLFTPSINLLHKNSESFVDWYEFLRNATFSVSIAFFGIFIAYYLYKPFYSSLLNLTLLNSFQKLNSKRIRWEKLINFVYNWSYNRGYIDAFFKTSLIESIRRLAKQTNFFDKRIIDGITNGVGITSFFVGEVTKYIGGSRISSYLFLYLSYVLIFLMILFFFYFEKF</sequence>
<gene>
    <name type="primary">ndhF</name>
</gene>
<protein>
    <recommendedName>
        <fullName>NAD(P)H-quinone oxidoreductase subunit 5, chloroplastic</fullName>
        <ecNumber>7.1.1.-</ecNumber>
    </recommendedName>
    <alternativeName>
        <fullName>NAD(P)H dehydrogenase subunit 5</fullName>
    </alternativeName>
    <alternativeName>
        <fullName>NADH-plastoquinone oxidoreductase subunit 5</fullName>
    </alternativeName>
</protein>
<organism>
    <name type="scientific">Nasturtium officinale</name>
    <name type="common">Watercress</name>
    <name type="synonym">Rorippa nasturtium-aquaticum</name>
    <dbReference type="NCBI Taxonomy" id="65948"/>
    <lineage>
        <taxon>Eukaryota</taxon>
        <taxon>Viridiplantae</taxon>
        <taxon>Streptophyta</taxon>
        <taxon>Embryophyta</taxon>
        <taxon>Tracheophyta</taxon>
        <taxon>Spermatophyta</taxon>
        <taxon>Magnoliopsida</taxon>
        <taxon>eudicotyledons</taxon>
        <taxon>Gunneridae</taxon>
        <taxon>Pentapetalae</taxon>
        <taxon>rosids</taxon>
        <taxon>malvids</taxon>
        <taxon>Brassicales</taxon>
        <taxon>Brassicaceae</taxon>
        <taxon>Cardamineae</taxon>
        <taxon>Nasturtium</taxon>
    </lineage>
</organism>
<geneLocation type="chloroplast"/>
<evidence type="ECO:0000250" key="1"/>
<evidence type="ECO:0000255" key="2"/>
<evidence type="ECO:0000305" key="3"/>
<comment type="function">
    <text evidence="1">NDH shuttles electrons from NAD(P)H:plastoquinone, via FMN and iron-sulfur (Fe-S) centers, to quinones in the photosynthetic chain and possibly in a chloroplast respiratory chain. The immediate electron acceptor for the enzyme in this species is believed to be plastoquinone. Couples the redox reaction to proton translocation, and thus conserves the redox energy in a proton gradient (By similarity).</text>
</comment>
<comment type="catalytic activity">
    <reaction>
        <text>a plastoquinone + NADH + (n+1) H(+)(in) = a plastoquinol + NAD(+) + n H(+)(out)</text>
        <dbReference type="Rhea" id="RHEA:42608"/>
        <dbReference type="Rhea" id="RHEA-COMP:9561"/>
        <dbReference type="Rhea" id="RHEA-COMP:9562"/>
        <dbReference type="ChEBI" id="CHEBI:15378"/>
        <dbReference type="ChEBI" id="CHEBI:17757"/>
        <dbReference type="ChEBI" id="CHEBI:57540"/>
        <dbReference type="ChEBI" id="CHEBI:57945"/>
        <dbReference type="ChEBI" id="CHEBI:62192"/>
    </reaction>
</comment>
<comment type="catalytic activity">
    <reaction>
        <text>a plastoquinone + NADPH + (n+1) H(+)(in) = a plastoquinol + NADP(+) + n H(+)(out)</text>
        <dbReference type="Rhea" id="RHEA:42612"/>
        <dbReference type="Rhea" id="RHEA-COMP:9561"/>
        <dbReference type="Rhea" id="RHEA-COMP:9562"/>
        <dbReference type="ChEBI" id="CHEBI:15378"/>
        <dbReference type="ChEBI" id="CHEBI:17757"/>
        <dbReference type="ChEBI" id="CHEBI:57783"/>
        <dbReference type="ChEBI" id="CHEBI:58349"/>
        <dbReference type="ChEBI" id="CHEBI:62192"/>
    </reaction>
</comment>
<comment type="subunit">
    <text evidence="1">NDH is composed of at least 16 different subunits, 5 of which are encoded in the nucleus.</text>
</comment>
<comment type="subcellular location">
    <subcellularLocation>
        <location evidence="1">Plastid</location>
        <location evidence="1">Chloroplast thylakoid membrane</location>
        <topology evidence="1">Multi-pass membrane protein</topology>
    </subcellularLocation>
</comment>
<comment type="similarity">
    <text evidence="3">Belongs to the complex I subunit 5 family.</text>
</comment>
<dbReference type="EC" id="7.1.1.-"/>
<dbReference type="EMBL" id="AP009376">
    <property type="protein sequence ID" value="BAF50687.1"/>
    <property type="molecule type" value="Genomic_DNA"/>
</dbReference>
<dbReference type="RefSeq" id="YP_001123862.1">
    <property type="nucleotide sequence ID" value="NC_009275.1"/>
</dbReference>
<dbReference type="SMR" id="A4QLY2"/>
<dbReference type="GeneID" id="4962107"/>
<dbReference type="GO" id="GO:0009535">
    <property type="term" value="C:chloroplast thylakoid membrane"/>
    <property type="evidence" value="ECO:0007669"/>
    <property type="project" value="UniProtKB-SubCell"/>
</dbReference>
<dbReference type="GO" id="GO:0008137">
    <property type="term" value="F:NADH dehydrogenase (ubiquinone) activity"/>
    <property type="evidence" value="ECO:0007669"/>
    <property type="project" value="InterPro"/>
</dbReference>
<dbReference type="GO" id="GO:0048038">
    <property type="term" value="F:quinone binding"/>
    <property type="evidence" value="ECO:0007669"/>
    <property type="project" value="UniProtKB-KW"/>
</dbReference>
<dbReference type="GO" id="GO:0042773">
    <property type="term" value="P:ATP synthesis coupled electron transport"/>
    <property type="evidence" value="ECO:0007669"/>
    <property type="project" value="InterPro"/>
</dbReference>
<dbReference type="GO" id="GO:0015990">
    <property type="term" value="P:electron transport coupled proton transport"/>
    <property type="evidence" value="ECO:0007669"/>
    <property type="project" value="TreeGrafter"/>
</dbReference>
<dbReference type="FunFam" id="1.20.5.2700:FF:000003">
    <property type="entry name" value="NAD(P)H-quinone oxidoreductase subunit 5, chloroplastic"/>
    <property type="match status" value="1"/>
</dbReference>
<dbReference type="Gene3D" id="1.20.5.2700">
    <property type="match status" value="1"/>
</dbReference>
<dbReference type="InterPro" id="IPR002128">
    <property type="entry name" value="NADH_UbQ_OxRdtase_chlpt_su5_C"/>
</dbReference>
<dbReference type="InterPro" id="IPR018393">
    <property type="entry name" value="NADHpl_OxRdtase_5_subgr"/>
</dbReference>
<dbReference type="InterPro" id="IPR001750">
    <property type="entry name" value="ND/Mrp_TM"/>
</dbReference>
<dbReference type="InterPro" id="IPR003945">
    <property type="entry name" value="NU5C-like"/>
</dbReference>
<dbReference type="InterPro" id="IPR001516">
    <property type="entry name" value="Proton_antipo_N"/>
</dbReference>
<dbReference type="NCBIfam" id="TIGR01974">
    <property type="entry name" value="NDH_I_L"/>
    <property type="match status" value="1"/>
</dbReference>
<dbReference type="NCBIfam" id="NF005141">
    <property type="entry name" value="PRK06590.1"/>
    <property type="match status" value="1"/>
</dbReference>
<dbReference type="PANTHER" id="PTHR42829">
    <property type="entry name" value="NADH-UBIQUINONE OXIDOREDUCTASE CHAIN 5"/>
    <property type="match status" value="1"/>
</dbReference>
<dbReference type="PANTHER" id="PTHR42829:SF2">
    <property type="entry name" value="NADH-UBIQUINONE OXIDOREDUCTASE CHAIN 5"/>
    <property type="match status" value="1"/>
</dbReference>
<dbReference type="Pfam" id="PF01010">
    <property type="entry name" value="Proton_antipo_C"/>
    <property type="match status" value="1"/>
</dbReference>
<dbReference type="Pfam" id="PF00361">
    <property type="entry name" value="Proton_antipo_M"/>
    <property type="match status" value="1"/>
</dbReference>
<dbReference type="Pfam" id="PF00662">
    <property type="entry name" value="Proton_antipo_N"/>
    <property type="match status" value="1"/>
</dbReference>
<dbReference type="PRINTS" id="PR01434">
    <property type="entry name" value="NADHDHGNASE5"/>
</dbReference>
<dbReference type="PRINTS" id="PR01435">
    <property type="entry name" value="NPOXDRDTASE5"/>
</dbReference>
<accession>A4QLY2</accession>
<feature type="chain" id="PRO_0000360951" description="NAD(P)H-quinone oxidoreductase subunit 5, chloroplastic">
    <location>
        <begin position="1"/>
        <end position="746"/>
    </location>
</feature>
<feature type="transmembrane region" description="Helical" evidence="2">
    <location>
        <begin position="9"/>
        <end position="29"/>
    </location>
</feature>
<feature type="transmembrane region" description="Helical" evidence="2">
    <location>
        <begin position="40"/>
        <end position="60"/>
    </location>
</feature>
<feature type="transmembrane region" description="Helical" evidence="2">
    <location>
        <begin position="89"/>
        <end position="109"/>
    </location>
</feature>
<feature type="transmembrane region" description="Helical" evidence="2">
    <location>
        <begin position="125"/>
        <end position="145"/>
    </location>
</feature>
<feature type="transmembrane region" description="Helical" evidence="2">
    <location>
        <begin position="147"/>
        <end position="167"/>
    </location>
</feature>
<feature type="transmembrane region" description="Helical" evidence="2">
    <location>
        <begin position="185"/>
        <end position="205"/>
    </location>
</feature>
<feature type="transmembrane region" description="Helical" evidence="2">
    <location>
        <begin position="221"/>
        <end position="241"/>
    </location>
</feature>
<feature type="transmembrane region" description="Helical" evidence="2">
    <location>
        <begin position="258"/>
        <end position="278"/>
    </location>
</feature>
<feature type="transmembrane region" description="Helical" evidence="2">
    <location>
        <begin position="280"/>
        <end position="300"/>
    </location>
</feature>
<feature type="transmembrane region" description="Helical" evidence="2">
    <location>
        <begin position="327"/>
        <end position="347"/>
    </location>
</feature>
<feature type="transmembrane region" description="Helical" evidence="2">
    <location>
        <begin position="354"/>
        <end position="374"/>
    </location>
</feature>
<feature type="transmembrane region" description="Helical" evidence="2">
    <location>
        <begin position="396"/>
        <end position="416"/>
    </location>
</feature>
<feature type="transmembrane region" description="Helical" evidence="2">
    <location>
        <begin position="425"/>
        <end position="445"/>
    </location>
</feature>
<feature type="transmembrane region" description="Helical" evidence="2">
    <location>
        <begin position="547"/>
        <end position="567"/>
    </location>
</feature>
<feature type="transmembrane region" description="Helical" evidence="2">
    <location>
        <begin position="608"/>
        <end position="628"/>
    </location>
</feature>
<feature type="transmembrane region" description="Helical" evidence="2">
    <location>
        <begin position="723"/>
        <end position="743"/>
    </location>
</feature>
<keyword id="KW-0150">Chloroplast</keyword>
<keyword id="KW-0472">Membrane</keyword>
<keyword id="KW-0520">NAD</keyword>
<keyword id="KW-0521">NADP</keyword>
<keyword id="KW-0934">Plastid</keyword>
<keyword id="KW-0618">Plastoquinone</keyword>
<keyword id="KW-0874">Quinone</keyword>
<keyword id="KW-0793">Thylakoid</keyword>
<keyword id="KW-1278">Translocase</keyword>
<keyword id="KW-0812">Transmembrane</keyword>
<keyword id="KW-1133">Transmembrane helix</keyword>
<keyword id="KW-0813">Transport</keyword>